<keyword id="KW-0961">Cell wall biogenesis/degradation</keyword>
<keyword id="KW-0456">Lyase</keyword>
<keyword id="KW-1185">Reference proteome</keyword>
<keyword id="KW-0732">Signal</keyword>
<name>RLPA_NEIMB</name>
<comment type="function">
    <text evidence="1">Lytic transglycosylase with a strong preference for naked glycan strands that lack stem peptides.</text>
</comment>
<comment type="similarity">
    <text evidence="1">Belongs to the RlpA family.</text>
</comment>
<protein>
    <recommendedName>
        <fullName evidence="1">Endolytic peptidoglycan transglycosylase RlpA</fullName>
        <ecNumber evidence="1">4.2.2.-</ecNumber>
    </recommendedName>
</protein>
<accession>Q9K1A0</accession>
<evidence type="ECO:0000255" key="1">
    <source>
        <dbReference type="HAMAP-Rule" id="MF_02071"/>
    </source>
</evidence>
<sequence>MTLTRKTLFLLTAAFGTHSLQTASADAVVKAEKLHASANRSYKVAGKRYTPKNQVAEFTQTGNASWYGGRFHGRKTSGGERYDMNAFTAAHKTLPIPSYVRVTNTKNGKSVIVRVNDRGPFHGNRIIDVSKAAAQKLGFVNQGTAHVKIEQIVPGQSAPVAENKDIFIDLKSFGTEHEAQAYLNQAAQNFAVSSSGTNLSVEKRRYEYVVKMGPFTSQERAAEAEAQARGMVRAVLTAG</sequence>
<gene>
    <name evidence="1" type="primary">rlpA</name>
    <name type="ordered locus">NMB0267</name>
</gene>
<feature type="signal peptide" evidence="1">
    <location>
        <begin position="1"/>
        <end position="25"/>
    </location>
</feature>
<feature type="chain" id="PRO_0000030807" description="Endolytic peptidoglycan transglycosylase RlpA" evidence="1">
    <location>
        <begin position="26"/>
        <end position="239"/>
    </location>
</feature>
<feature type="domain" description="SPOR" evidence="1">
    <location>
        <begin position="160"/>
        <end position="239"/>
    </location>
</feature>
<dbReference type="EC" id="4.2.2.-" evidence="1"/>
<dbReference type="EMBL" id="AE002098">
    <property type="protein sequence ID" value="AAF40721.1"/>
    <property type="molecule type" value="Genomic_DNA"/>
</dbReference>
<dbReference type="PIR" id="D81218">
    <property type="entry name" value="D81218"/>
</dbReference>
<dbReference type="RefSeq" id="NP_273323.1">
    <property type="nucleotide sequence ID" value="NC_003112.2"/>
</dbReference>
<dbReference type="RefSeq" id="WP_002221924.1">
    <property type="nucleotide sequence ID" value="NC_003112.2"/>
</dbReference>
<dbReference type="SMR" id="Q9K1A0"/>
<dbReference type="STRING" id="122586.NMB0267"/>
<dbReference type="PaxDb" id="122586-NMB0267"/>
<dbReference type="DNASU" id="902378"/>
<dbReference type="KEGG" id="nme:NMB0267"/>
<dbReference type="PATRIC" id="fig|122586.8.peg.332"/>
<dbReference type="HOGENOM" id="CLU_042923_3_4_4"/>
<dbReference type="InParanoid" id="Q9K1A0"/>
<dbReference type="OrthoDB" id="9779128at2"/>
<dbReference type="Proteomes" id="UP000000425">
    <property type="component" value="Chromosome"/>
</dbReference>
<dbReference type="GO" id="GO:0008932">
    <property type="term" value="F:lytic endotransglycosylase activity"/>
    <property type="evidence" value="ECO:0007669"/>
    <property type="project" value="UniProtKB-UniRule"/>
</dbReference>
<dbReference type="GO" id="GO:0042834">
    <property type="term" value="F:peptidoglycan binding"/>
    <property type="evidence" value="ECO:0007669"/>
    <property type="project" value="InterPro"/>
</dbReference>
<dbReference type="GO" id="GO:0071555">
    <property type="term" value="P:cell wall organization"/>
    <property type="evidence" value="ECO:0007669"/>
    <property type="project" value="UniProtKB-KW"/>
</dbReference>
<dbReference type="GO" id="GO:0000270">
    <property type="term" value="P:peptidoglycan metabolic process"/>
    <property type="evidence" value="ECO:0007669"/>
    <property type="project" value="UniProtKB-UniRule"/>
</dbReference>
<dbReference type="CDD" id="cd22268">
    <property type="entry name" value="DPBB_RlpA-like"/>
    <property type="match status" value="1"/>
</dbReference>
<dbReference type="FunFam" id="2.40.40.10:FF:000003">
    <property type="entry name" value="Endolytic peptidoglycan transglycosylase RlpA"/>
    <property type="match status" value="1"/>
</dbReference>
<dbReference type="Gene3D" id="2.40.40.10">
    <property type="entry name" value="RlpA-like domain"/>
    <property type="match status" value="1"/>
</dbReference>
<dbReference type="HAMAP" id="MF_02071">
    <property type="entry name" value="RlpA"/>
    <property type="match status" value="1"/>
</dbReference>
<dbReference type="InterPro" id="IPR034718">
    <property type="entry name" value="RlpA"/>
</dbReference>
<dbReference type="InterPro" id="IPR009009">
    <property type="entry name" value="RlpA-like_DPBB"/>
</dbReference>
<dbReference type="InterPro" id="IPR036908">
    <property type="entry name" value="RlpA-like_sf"/>
</dbReference>
<dbReference type="InterPro" id="IPR012997">
    <property type="entry name" value="RplA"/>
</dbReference>
<dbReference type="InterPro" id="IPR007730">
    <property type="entry name" value="SPOR-like_dom"/>
</dbReference>
<dbReference type="NCBIfam" id="TIGR00413">
    <property type="entry name" value="rlpA"/>
    <property type="match status" value="1"/>
</dbReference>
<dbReference type="PANTHER" id="PTHR34183">
    <property type="entry name" value="ENDOLYTIC PEPTIDOGLYCAN TRANSGLYCOSYLASE RLPA"/>
    <property type="match status" value="1"/>
</dbReference>
<dbReference type="PANTHER" id="PTHR34183:SF1">
    <property type="entry name" value="ENDOLYTIC PEPTIDOGLYCAN TRANSGLYCOSYLASE RLPA"/>
    <property type="match status" value="1"/>
</dbReference>
<dbReference type="Pfam" id="PF03330">
    <property type="entry name" value="DPBB_1"/>
    <property type="match status" value="1"/>
</dbReference>
<dbReference type="Pfam" id="PF05036">
    <property type="entry name" value="SPOR"/>
    <property type="match status" value="1"/>
</dbReference>
<dbReference type="SUPFAM" id="SSF50685">
    <property type="entry name" value="Barwin-like endoglucanases"/>
    <property type="match status" value="1"/>
</dbReference>
<dbReference type="PROSITE" id="PS51724">
    <property type="entry name" value="SPOR"/>
    <property type="match status" value="1"/>
</dbReference>
<organism>
    <name type="scientific">Neisseria meningitidis serogroup B (strain ATCC BAA-335 / MC58)</name>
    <dbReference type="NCBI Taxonomy" id="122586"/>
    <lineage>
        <taxon>Bacteria</taxon>
        <taxon>Pseudomonadati</taxon>
        <taxon>Pseudomonadota</taxon>
        <taxon>Betaproteobacteria</taxon>
        <taxon>Neisseriales</taxon>
        <taxon>Neisseriaceae</taxon>
        <taxon>Neisseria</taxon>
    </lineage>
</organism>
<reference key="1">
    <citation type="journal article" date="2000" name="Science">
        <title>Complete genome sequence of Neisseria meningitidis serogroup B strain MC58.</title>
        <authorList>
            <person name="Tettelin H."/>
            <person name="Saunders N.J."/>
            <person name="Heidelberg J.F."/>
            <person name="Jeffries A.C."/>
            <person name="Nelson K.E."/>
            <person name="Eisen J.A."/>
            <person name="Ketchum K.A."/>
            <person name="Hood D.W."/>
            <person name="Peden J.F."/>
            <person name="Dodson R.J."/>
            <person name="Nelson W.C."/>
            <person name="Gwinn M.L."/>
            <person name="DeBoy R.T."/>
            <person name="Peterson J.D."/>
            <person name="Hickey E.K."/>
            <person name="Haft D.H."/>
            <person name="Salzberg S.L."/>
            <person name="White O."/>
            <person name="Fleischmann R.D."/>
            <person name="Dougherty B.A."/>
            <person name="Mason T.M."/>
            <person name="Ciecko A."/>
            <person name="Parksey D.S."/>
            <person name="Blair E."/>
            <person name="Cittone H."/>
            <person name="Clark E.B."/>
            <person name="Cotton M.D."/>
            <person name="Utterback T.R."/>
            <person name="Khouri H.M."/>
            <person name="Qin H."/>
            <person name="Vamathevan J.J."/>
            <person name="Gill J."/>
            <person name="Scarlato V."/>
            <person name="Masignani V."/>
            <person name="Pizza M."/>
            <person name="Grandi G."/>
            <person name="Sun L."/>
            <person name="Smith H.O."/>
            <person name="Fraser C.M."/>
            <person name="Moxon E.R."/>
            <person name="Rappuoli R."/>
            <person name="Venter J.C."/>
        </authorList>
    </citation>
    <scope>NUCLEOTIDE SEQUENCE [LARGE SCALE GENOMIC DNA]</scope>
    <source>
        <strain>ATCC BAA-335 / MC58</strain>
    </source>
</reference>
<proteinExistence type="inferred from homology"/>